<evidence type="ECO:0000250" key="1">
    <source>
        <dbReference type="UniProtKB" id="Q5HZ54"/>
    </source>
</evidence>
<evidence type="ECO:0000250" key="2">
    <source>
        <dbReference type="UniProtKB" id="Q9SRN4"/>
    </source>
</evidence>
<evidence type="ECO:0000255" key="3">
    <source>
        <dbReference type="PROSITE-ProRule" id="PRU00224"/>
    </source>
</evidence>
<evidence type="ECO:0000256" key="4">
    <source>
        <dbReference type="SAM" id="MobiDB-lite"/>
    </source>
</evidence>
<evidence type="ECO:0000303" key="5">
    <source>
    </source>
</evidence>
<evidence type="ECO:0000312" key="6">
    <source>
        <dbReference type="Araport" id="AT1G28070"/>
    </source>
</evidence>
<evidence type="ECO:0000312" key="7">
    <source>
        <dbReference type="EMBL" id="AAG51495.1"/>
    </source>
</evidence>
<reference key="1">
    <citation type="journal article" date="2000" name="Nature">
        <title>Sequence and analysis of chromosome 1 of the plant Arabidopsis thaliana.</title>
        <authorList>
            <person name="Theologis A."/>
            <person name="Ecker J.R."/>
            <person name="Palm C.J."/>
            <person name="Federspiel N.A."/>
            <person name="Kaul S."/>
            <person name="White O."/>
            <person name="Alonso J."/>
            <person name="Altafi H."/>
            <person name="Araujo R."/>
            <person name="Bowman C.L."/>
            <person name="Brooks S.Y."/>
            <person name="Buehler E."/>
            <person name="Chan A."/>
            <person name="Chao Q."/>
            <person name="Chen H."/>
            <person name="Cheuk R.F."/>
            <person name="Chin C.W."/>
            <person name="Chung M.K."/>
            <person name="Conn L."/>
            <person name="Conway A.B."/>
            <person name="Conway A.R."/>
            <person name="Creasy T.H."/>
            <person name="Dewar K."/>
            <person name="Dunn P."/>
            <person name="Etgu P."/>
            <person name="Feldblyum T.V."/>
            <person name="Feng J.-D."/>
            <person name="Fong B."/>
            <person name="Fujii C.Y."/>
            <person name="Gill J.E."/>
            <person name="Goldsmith A.D."/>
            <person name="Haas B."/>
            <person name="Hansen N.F."/>
            <person name="Hughes B."/>
            <person name="Huizar L."/>
            <person name="Hunter J.L."/>
            <person name="Jenkins J."/>
            <person name="Johnson-Hopson C."/>
            <person name="Khan S."/>
            <person name="Khaykin E."/>
            <person name="Kim C.J."/>
            <person name="Koo H.L."/>
            <person name="Kremenetskaia I."/>
            <person name="Kurtz D.B."/>
            <person name="Kwan A."/>
            <person name="Lam B."/>
            <person name="Langin-Hooper S."/>
            <person name="Lee A."/>
            <person name="Lee J.M."/>
            <person name="Lenz C.A."/>
            <person name="Li J.H."/>
            <person name="Li Y.-P."/>
            <person name="Lin X."/>
            <person name="Liu S.X."/>
            <person name="Liu Z.A."/>
            <person name="Luros J.S."/>
            <person name="Maiti R."/>
            <person name="Marziali A."/>
            <person name="Militscher J."/>
            <person name="Miranda M."/>
            <person name="Nguyen M."/>
            <person name="Nierman W.C."/>
            <person name="Osborne B.I."/>
            <person name="Pai G."/>
            <person name="Peterson J."/>
            <person name="Pham P.K."/>
            <person name="Rizzo M."/>
            <person name="Rooney T."/>
            <person name="Rowley D."/>
            <person name="Sakano H."/>
            <person name="Salzberg S.L."/>
            <person name="Schwartz J.R."/>
            <person name="Shinn P."/>
            <person name="Southwick A.M."/>
            <person name="Sun H."/>
            <person name="Tallon L.J."/>
            <person name="Tambunga G."/>
            <person name="Toriumi M.J."/>
            <person name="Town C.D."/>
            <person name="Utterback T."/>
            <person name="Van Aken S."/>
            <person name="Vaysberg M."/>
            <person name="Vysotskaia V.S."/>
            <person name="Walker M."/>
            <person name="Wu D."/>
            <person name="Yu G."/>
            <person name="Fraser C.M."/>
            <person name="Venter J.C."/>
            <person name="Davis R.W."/>
        </authorList>
    </citation>
    <scope>NUCLEOTIDE SEQUENCE [LARGE SCALE GENOMIC DNA]</scope>
    <source>
        <strain>cv. Columbia</strain>
    </source>
</reference>
<reference key="2">
    <citation type="journal article" date="2017" name="Plant J.">
        <title>Araport11: a complete reannotation of the Arabidopsis thaliana reference genome.</title>
        <authorList>
            <person name="Cheng C.Y."/>
            <person name="Krishnakumar V."/>
            <person name="Chan A.P."/>
            <person name="Thibaud-Nissen F."/>
            <person name="Schobel S."/>
            <person name="Town C.D."/>
        </authorList>
    </citation>
    <scope>GENOME REANNOTATION</scope>
    <source>
        <strain>cv. Columbia</strain>
    </source>
</reference>
<reference key="3">
    <citation type="submission" date="2004-02" db="EMBL/GenBank/DDBJ databases">
        <title>Arabidopsis ORF clones.</title>
        <authorList>
            <person name="Kim C.J."/>
            <person name="Chen H."/>
            <person name="Cheuk R.F."/>
            <person name="Shinn P."/>
            <person name="Ecker J.R."/>
        </authorList>
    </citation>
    <scope>NUCLEOTIDE SEQUENCE [LARGE SCALE MRNA]</scope>
    <source>
        <strain>cv. Columbia</strain>
    </source>
</reference>
<reference key="4">
    <citation type="submission" date="2005-03" db="EMBL/GenBank/DDBJ databases">
        <title>Large-scale analysis of RIKEN Arabidopsis full-length (RAFL) cDNAs.</title>
        <authorList>
            <person name="Totoki Y."/>
            <person name="Seki M."/>
            <person name="Ishida J."/>
            <person name="Nakajima M."/>
            <person name="Enju A."/>
            <person name="Kamiya A."/>
            <person name="Narusaka M."/>
            <person name="Shin-i T."/>
            <person name="Nakagawa M."/>
            <person name="Sakamoto N."/>
            <person name="Oishi K."/>
            <person name="Kohara Y."/>
            <person name="Kobayashi M."/>
            <person name="Toyoda A."/>
            <person name="Sakaki Y."/>
            <person name="Sakurai T."/>
            <person name="Iida K."/>
            <person name="Akiyama K."/>
            <person name="Satou M."/>
            <person name="Toyoda T."/>
            <person name="Konagaya A."/>
            <person name="Carninci P."/>
            <person name="Kawai J."/>
            <person name="Hayashizaki Y."/>
            <person name="Shinozaki K."/>
        </authorList>
    </citation>
    <scope>NUCLEOTIDE SEQUENCE [LARGE SCALE MRNA]</scope>
    <source>
        <strain>cv. Columbia</strain>
    </source>
</reference>
<reference key="5">
    <citation type="journal article" date="2011" name="Plant Cell">
        <title>CFL1, a WW domain protein, regulates cuticle development by modulating the function of HDG1, a class IV homeodomain transcription factor, in rice and Arabidopsis.</title>
        <authorList>
            <person name="Wu R."/>
            <person name="Li S."/>
            <person name="He S."/>
            <person name="Wassmann F."/>
            <person name="Yu C."/>
            <person name="Qin G."/>
            <person name="Schreiber L."/>
            <person name="Qu L.-J."/>
            <person name="Gu H."/>
        </authorList>
    </citation>
    <scope>GENE FAMILY</scope>
    <source>
        <strain>cv. Columbia</strain>
    </source>
</reference>
<organism>
    <name type="scientific">Arabidopsis thaliana</name>
    <name type="common">Mouse-ear cress</name>
    <dbReference type="NCBI Taxonomy" id="3702"/>
    <lineage>
        <taxon>Eukaryota</taxon>
        <taxon>Viridiplantae</taxon>
        <taxon>Streptophyta</taxon>
        <taxon>Embryophyta</taxon>
        <taxon>Tracheophyta</taxon>
        <taxon>Spermatophyta</taxon>
        <taxon>Magnoliopsida</taxon>
        <taxon>eudicotyledons</taxon>
        <taxon>Gunneridae</taxon>
        <taxon>Pentapetalae</taxon>
        <taxon>rosids</taxon>
        <taxon>malvids</taxon>
        <taxon>Brassicales</taxon>
        <taxon>Brassicaceae</taxon>
        <taxon>Camelineae</taxon>
        <taxon>Arabidopsis</taxon>
    </lineage>
</organism>
<accession>Q9C7E6</accession>
<dbReference type="EMBL" id="AC069471">
    <property type="protein sequence ID" value="AAG51495.1"/>
    <property type="molecule type" value="Genomic_DNA"/>
</dbReference>
<dbReference type="EMBL" id="CP002684">
    <property type="protein sequence ID" value="AEE30908.1"/>
    <property type="molecule type" value="Genomic_DNA"/>
</dbReference>
<dbReference type="EMBL" id="BT011669">
    <property type="protein sequence ID" value="AAS47675.1"/>
    <property type="molecule type" value="mRNA"/>
</dbReference>
<dbReference type="EMBL" id="AK220610">
    <property type="protein sequence ID" value="BAD94977.1"/>
    <property type="molecule type" value="mRNA"/>
</dbReference>
<dbReference type="PIR" id="D86406">
    <property type="entry name" value="D86406"/>
</dbReference>
<dbReference type="RefSeq" id="NP_174128.1">
    <property type="nucleotide sequence ID" value="NM_102572.3"/>
</dbReference>
<dbReference type="SMR" id="Q9C7E6"/>
<dbReference type="FunCoup" id="Q9C7E6">
    <property type="interactions" value="420"/>
</dbReference>
<dbReference type="PaxDb" id="3702-AT1G28070.1"/>
<dbReference type="EnsemblPlants" id="AT1G28070.1">
    <property type="protein sequence ID" value="AT1G28070.1"/>
    <property type="gene ID" value="AT1G28070"/>
</dbReference>
<dbReference type="GeneID" id="839700"/>
<dbReference type="Gramene" id="AT1G28070.1">
    <property type="protein sequence ID" value="AT1G28070.1"/>
    <property type="gene ID" value="AT1G28070"/>
</dbReference>
<dbReference type="KEGG" id="ath:AT1G28070"/>
<dbReference type="Araport" id="AT1G28070"/>
<dbReference type="TAIR" id="AT1G28070"/>
<dbReference type="eggNOG" id="ENOG502RXWN">
    <property type="taxonomic scope" value="Eukaryota"/>
</dbReference>
<dbReference type="HOGENOM" id="CLU_070197_2_0_1"/>
<dbReference type="InParanoid" id="Q9C7E6"/>
<dbReference type="OMA" id="MSDEHIP"/>
<dbReference type="OrthoDB" id="1930512at2759"/>
<dbReference type="PRO" id="PR:Q9C7E6"/>
<dbReference type="Proteomes" id="UP000006548">
    <property type="component" value="Chromosome 1"/>
</dbReference>
<dbReference type="ExpressionAtlas" id="Q9C7E6">
    <property type="expression patterns" value="baseline and differential"/>
</dbReference>
<dbReference type="GO" id="GO:0005524">
    <property type="term" value="F:ATP binding"/>
    <property type="evidence" value="ECO:0007669"/>
    <property type="project" value="UniProtKB-KW"/>
</dbReference>
<dbReference type="GO" id="GO:0004386">
    <property type="term" value="F:helicase activity"/>
    <property type="evidence" value="ECO:0007669"/>
    <property type="project" value="UniProtKB-KW"/>
</dbReference>
<dbReference type="GO" id="GO:0016787">
    <property type="term" value="F:hydrolase activity"/>
    <property type="evidence" value="ECO:0007669"/>
    <property type="project" value="UniProtKB-KW"/>
</dbReference>
<dbReference type="InterPro" id="IPR051105">
    <property type="entry name" value="WWC/KIBRA_Hippo_Reg"/>
</dbReference>
<dbReference type="PANTHER" id="PTHR14791">
    <property type="entry name" value="BOMB/KIRA PROTEINS"/>
    <property type="match status" value="1"/>
</dbReference>
<dbReference type="PANTHER" id="PTHR14791:SF29">
    <property type="entry name" value="PROTEIN KIBRA"/>
    <property type="match status" value="1"/>
</dbReference>
<feature type="chain" id="PRO_0000456303" description="Protein CURLY FLAG LEAF 2">
    <location>
        <begin position="1"/>
        <end position="176"/>
    </location>
</feature>
<feature type="domain" description="WW" evidence="3">
    <location>
        <begin position="48"/>
        <end position="82"/>
    </location>
</feature>
<feature type="region of interest" description="Disordered" evidence="4">
    <location>
        <begin position="77"/>
        <end position="106"/>
    </location>
</feature>
<feature type="region of interest" description="Disordered" evidence="4">
    <location>
        <begin position="111"/>
        <end position="130"/>
    </location>
</feature>
<feature type="short sequence motif" description="EAR" evidence="2">
    <location>
        <begin position="41"/>
        <end position="46"/>
    </location>
</feature>
<feature type="compositionally biased region" description="Low complexity" evidence="4">
    <location>
        <begin position="93"/>
        <end position="106"/>
    </location>
</feature>
<protein>
    <recommendedName>
        <fullName evidence="5">Protein CURLY FLAG LEAF 2</fullName>
        <shortName evidence="5">AtCFL2</shortName>
    </recommendedName>
</protein>
<proteinExistence type="evidence at transcript level"/>
<gene>
    <name evidence="5" type="primary">CFL2</name>
    <name evidence="6" type="ordered locus">At1g28070</name>
    <name evidence="7" type="ORF">F13K9.17</name>
</gene>
<keyword id="KW-0067">ATP-binding</keyword>
<keyword id="KW-0347">Helicase</keyword>
<keyword id="KW-0378">Hydrolase</keyword>
<keyword id="KW-0547">Nucleotide-binding</keyword>
<keyword id="KW-1185">Reference proteome</keyword>
<comment type="function">
    <text evidence="1">May negatively regulate the cuticle development by interacting with the HD-ZIP IV transcription factor HDG1.</text>
</comment>
<comment type="subunit">
    <text evidence="1">May interact with BHLH122/CFLAP1 and BHLH80/CFLAP2.</text>
</comment>
<name>CFL2_ARATH</name>
<sequence length="176" mass="19948">MADITEYLERSMQNCSLIDRRSSMGDGFGMSDEHIPISDRFLELSSHFSVPSHLEQCLDLKTGEIYYRSWNSGMRVKEDPRKSMSRGNYADQSSGESSGTVFSSEEVSSYYESEESSSESSPSSRKYHKEEQDEDVLVVAGCKACLMYFMVPKLFKDCPKCATQLLHFDQLHSTSP</sequence>